<comment type="function">
    <text evidence="5 6">S-adenosyl-L-methionine-dependent transferase that acts as a component of the wybutosine biosynthesis pathway. Wybutosine is a hyper modified guanosine with a tricyclic base found at the 3'-position adjacent to the anticodon of eukaryotic phenylalanine tRNA. Catalyzes the transfer of the alpha-amino-alpha-carboxypropyl (acp) group from S-adenosyl-L-methionine to the C-7 position of 4-demethylwyosine (imG-14) to produce wybutosine-86.</text>
</comment>
<comment type="catalytic activity">
    <reaction evidence="5">
        <text>4-demethylwyosine(37) in tRNA(Phe) + S-adenosyl-L-methionine = 4-demethyl-7-[(3S)-3-amino-3-carboxypropyl]wyosine(37) in tRNA(Phe) + S-methyl-5'-thioadenosine + H(+)</text>
        <dbReference type="Rhea" id="RHEA:36355"/>
        <dbReference type="Rhea" id="RHEA-COMP:10164"/>
        <dbReference type="Rhea" id="RHEA-COMP:10378"/>
        <dbReference type="ChEBI" id="CHEBI:15378"/>
        <dbReference type="ChEBI" id="CHEBI:17509"/>
        <dbReference type="ChEBI" id="CHEBI:59789"/>
        <dbReference type="ChEBI" id="CHEBI:64315"/>
        <dbReference type="ChEBI" id="CHEBI:73550"/>
        <dbReference type="EC" id="2.5.1.114"/>
    </reaction>
</comment>
<comment type="pathway">
    <text evidence="4 5 6">tRNA modification; wybutosine-tRNA(Phe) biosynthesis.</text>
</comment>
<comment type="subcellular location">
    <subcellularLocation>
        <location evidence="2">Cytoplasm</location>
    </subcellularLocation>
</comment>
<comment type="disruption phenotype">
    <text evidence="4">tRNA(Phe) from mutant shows accumulation of 4-demethylwyosine (ImG-14) and absence of wybutosine.</text>
</comment>
<comment type="miscellaneous">
    <text evidence="3">Present with 656 molecules/cell in log phase SD medium.</text>
</comment>
<comment type="similarity">
    <text evidence="1">Belongs to the class I-like SAM-binding methyltransferase superfamily. TRM5/TYW2 family.</text>
</comment>
<comment type="caution">
    <text evidence="7">Was originally thought to be a methyltransferase.</text>
</comment>
<protein>
    <recommendedName>
        <fullName>tRNA wybutosine-synthesizing protein 2</fullName>
        <shortName>tRNA-yW-synthesizing protein 2</shortName>
        <ecNumber>2.5.1.114</ecNumber>
    </recommendedName>
    <alternativeName>
        <fullName>tRNA(Phe) (4-demethylwyosine(37)-C(7)) aminocarboxypropyltransferase</fullName>
    </alternativeName>
</protein>
<proteinExistence type="evidence at protein level"/>
<reference key="1">
    <citation type="journal article" date="1997" name="Nature">
        <title>The nucleotide sequence of Saccharomyces cerevisiae chromosome XIII.</title>
        <authorList>
            <person name="Bowman S."/>
            <person name="Churcher C.M."/>
            <person name="Badcock K."/>
            <person name="Brown D."/>
            <person name="Chillingworth T."/>
            <person name="Connor R."/>
            <person name="Dedman K."/>
            <person name="Devlin K."/>
            <person name="Gentles S."/>
            <person name="Hamlin N."/>
            <person name="Hunt S."/>
            <person name="Jagels K."/>
            <person name="Lye G."/>
            <person name="Moule S."/>
            <person name="Odell C."/>
            <person name="Pearson D."/>
            <person name="Rajandream M.A."/>
            <person name="Rice P."/>
            <person name="Skelton J."/>
            <person name="Walsh S.V."/>
            <person name="Whitehead S."/>
            <person name="Barrell B.G."/>
        </authorList>
    </citation>
    <scope>NUCLEOTIDE SEQUENCE [LARGE SCALE GENOMIC DNA]</scope>
    <source>
        <strain>ATCC 204508 / S288c</strain>
    </source>
</reference>
<reference key="2">
    <citation type="journal article" date="2014" name="G3 (Bethesda)">
        <title>The reference genome sequence of Saccharomyces cerevisiae: Then and now.</title>
        <authorList>
            <person name="Engel S.R."/>
            <person name="Dietrich F.S."/>
            <person name="Fisk D.G."/>
            <person name="Binkley G."/>
            <person name="Balakrishnan R."/>
            <person name="Costanzo M.C."/>
            <person name="Dwight S.S."/>
            <person name="Hitz B.C."/>
            <person name="Karra K."/>
            <person name="Nash R.S."/>
            <person name="Weng S."/>
            <person name="Wong E.D."/>
            <person name="Lloyd P."/>
            <person name="Skrzypek M.S."/>
            <person name="Miyasato S.R."/>
            <person name="Simison M."/>
            <person name="Cherry J.M."/>
        </authorList>
    </citation>
    <scope>GENOME REANNOTATION</scope>
    <source>
        <strain>ATCC 204508 / S288c</strain>
    </source>
</reference>
<reference key="3">
    <citation type="journal article" date="2003" name="Nature">
        <title>Global analysis of protein localization in budding yeast.</title>
        <authorList>
            <person name="Huh W.-K."/>
            <person name="Falvo J.V."/>
            <person name="Gerke L.C."/>
            <person name="Carroll A.S."/>
            <person name="Howson R.W."/>
            <person name="Weissman J.S."/>
            <person name="O'Shea E.K."/>
        </authorList>
    </citation>
    <scope>SUBCELLULAR LOCATION [LARGE SCALE ANALYSIS]</scope>
</reference>
<reference key="4">
    <citation type="journal article" date="2003" name="Nature">
        <title>Global analysis of protein expression in yeast.</title>
        <authorList>
            <person name="Ghaemmaghami S."/>
            <person name="Huh W.-K."/>
            <person name="Bower K."/>
            <person name="Howson R.W."/>
            <person name="Belle A."/>
            <person name="Dephoure N."/>
            <person name="O'Shea E.K."/>
            <person name="Weissman J.S."/>
        </authorList>
    </citation>
    <scope>LEVEL OF PROTEIN EXPRESSION [LARGE SCALE ANALYSIS]</scope>
</reference>
<reference key="5">
    <citation type="journal article" date="2005" name="Biochem. Biophys. Res. Commun.">
        <title>A novel methyltransferase required for the formation of the hypermodified nucleoside wybutosine in eucaryotic tRNA.</title>
        <authorList>
            <person name="Kalhor H.R."/>
            <person name="Penjwini M."/>
            <person name="Clarke S."/>
        </authorList>
    </citation>
    <scope>PATHWAY</scope>
    <scope>DISRUPTION PHENOTYPE</scope>
</reference>
<reference key="6">
    <citation type="journal article" date="2006" name="EMBO J.">
        <title>Biosynthesis of wybutosine, a hyper-modified nucleoside in eukaryotic phenylalanine tRNA.</title>
        <authorList>
            <person name="Noma A."/>
            <person name="Kirino Y."/>
            <person name="Ikeuchi Y."/>
            <person name="Suzuki T."/>
        </authorList>
    </citation>
    <scope>FUNCTION</scope>
    <scope>CATALYTIC ACTIVITY</scope>
    <scope>PATHWAY</scope>
</reference>
<reference key="7">
    <citation type="journal article" date="2006" name="Nucleic Acids Symp. Ser.">
        <title>Ribonucleome analysis identified enzyme genes responsible for wybutosine synthesis.</title>
        <authorList>
            <person name="Noma A."/>
            <person name="Suzuki T."/>
        </authorList>
    </citation>
    <scope>FUNCTION</scope>
    <scope>PATHWAY</scope>
</reference>
<name>TYW2_YEAST</name>
<sequence>MSDETMPVEFLVSDKRLLKTIKVKLETNGLFVTPIYSDNDNKVIKSSIEDLNHPLAVEINNIAGVKARFHESGNLERSEGHLKHQSNSITEFTKSFLKDHGLANDKIFLSHLLDHLPLKYTIYPPVVLFNNSTVRSFNHPIWQKAFQLKLFDPNEYYRELLCFLSPGKPSKGTSLHPNNRLLTHLAINNPITEADVLRRPFNIQPLYGKLIDDSILDDNDNTLWENPSQEQLNSSIWCKVIQNGVTQIWSPVFTMFSRGNIKEKKRVLTTFPDICNNDVVDLYAGIGYFTFSYLTKGARTLFAFELNPWSVEGLKRGLKANGFNKSGNCHVFQESNEMCVQRLTEFLSQNPGFRLRIRHINLGLLPSSKQGWPLAIKLIYLQGASLEKVTMHIHENVHIDAIEDGSFEKNVIVELDAINESIALIRNRGIKLQFVRSKLERIKTFAPDIWHVCVDVDVIVST</sequence>
<evidence type="ECO:0000255" key="1">
    <source>
        <dbReference type="PROSITE-ProRule" id="PRU01021"/>
    </source>
</evidence>
<evidence type="ECO:0000269" key="2">
    <source>
    </source>
</evidence>
<evidence type="ECO:0000269" key="3">
    <source>
    </source>
</evidence>
<evidence type="ECO:0000269" key="4">
    <source>
    </source>
</evidence>
<evidence type="ECO:0000269" key="5">
    <source>
    </source>
</evidence>
<evidence type="ECO:0000269" key="6">
    <source>
    </source>
</evidence>
<evidence type="ECO:0000305" key="7">
    <source>
    </source>
</evidence>
<dbReference type="EC" id="2.5.1.114"/>
<dbReference type="EMBL" id="Z49810">
    <property type="protein sequence ID" value="CAA89947.1"/>
    <property type="molecule type" value="Genomic_DNA"/>
</dbReference>
<dbReference type="EMBL" id="BK006946">
    <property type="protein sequence ID" value="DAA09894.1"/>
    <property type="molecule type" value="Genomic_DNA"/>
</dbReference>
<dbReference type="PIR" id="S55114">
    <property type="entry name" value="S55114"/>
</dbReference>
<dbReference type="RefSeq" id="NP_013709.1">
    <property type="nucleotide sequence ID" value="NM_001182360.1"/>
</dbReference>
<dbReference type="BioGRID" id="35166">
    <property type="interactions" value="79"/>
</dbReference>
<dbReference type="FunCoup" id="Q04235">
    <property type="interactions" value="51"/>
</dbReference>
<dbReference type="IntAct" id="Q04235">
    <property type="interactions" value="1"/>
</dbReference>
<dbReference type="MINT" id="Q04235"/>
<dbReference type="STRING" id="4932.YML005W"/>
<dbReference type="iPTMnet" id="Q04235"/>
<dbReference type="PaxDb" id="4932-YML005W"/>
<dbReference type="PeptideAtlas" id="Q04235"/>
<dbReference type="EnsemblFungi" id="YML005W_mRNA">
    <property type="protein sequence ID" value="YML005W"/>
    <property type="gene ID" value="YML005W"/>
</dbReference>
<dbReference type="GeneID" id="855008"/>
<dbReference type="KEGG" id="sce:YML005W"/>
<dbReference type="AGR" id="SGD:S000004464"/>
<dbReference type="SGD" id="S000004464">
    <property type="gene designation" value="TRM12"/>
</dbReference>
<dbReference type="VEuPathDB" id="FungiDB:YML005W"/>
<dbReference type="eggNOG" id="KOG1227">
    <property type="taxonomic scope" value="Eukaryota"/>
</dbReference>
<dbReference type="GeneTree" id="ENSGT00940000153304"/>
<dbReference type="HOGENOM" id="CLU_023588_1_0_1"/>
<dbReference type="InParanoid" id="Q04235"/>
<dbReference type="OMA" id="FELNPWS"/>
<dbReference type="OrthoDB" id="2387925at2759"/>
<dbReference type="BioCyc" id="MetaCyc:G3O-32610-MONOMER"/>
<dbReference type="BioCyc" id="YEAST:G3O-32610-MONOMER"/>
<dbReference type="BRENDA" id="2.5.1.114">
    <property type="organism ID" value="984"/>
</dbReference>
<dbReference type="UniPathway" id="UPA00375"/>
<dbReference type="BioGRID-ORCS" id="855008">
    <property type="hits" value="0 hits in 10 CRISPR screens"/>
</dbReference>
<dbReference type="PRO" id="PR:Q04235"/>
<dbReference type="Proteomes" id="UP000002311">
    <property type="component" value="Chromosome XIII"/>
</dbReference>
<dbReference type="RNAct" id="Q04235">
    <property type="molecule type" value="protein"/>
</dbReference>
<dbReference type="GO" id="GO:0005737">
    <property type="term" value="C:cytoplasm"/>
    <property type="evidence" value="ECO:0007005"/>
    <property type="project" value="SGD"/>
</dbReference>
<dbReference type="GO" id="GO:0008757">
    <property type="term" value="F:S-adenosylmethionine-dependent methyltransferase activity"/>
    <property type="evidence" value="ECO:0000314"/>
    <property type="project" value="SGD"/>
</dbReference>
<dbReference type="GO" id="GO:0016765">
    <property type="term" value="F:transferase activity, transferring alkyl or aryl (other than methyl) groups"/>
    <property type="evidence" value="ECO:0000314"/>
    <property type="project" value="SGD"/>
</dbReference>
<dbReference type="GO" id="GO:0102522">
    <property type="term" value="F:tRNA 4-demethylwyosine alpha-amino-alpha-carboxypropyltransferase activity"/>
    <property type="evidence" value="ECO:0007669"/>
    <property type="project" value="UniProtKB-EC"/>
</dbReference>
<dbReference type="GO" id="GO:0008175">
    <property type="term" value="F:tRNA methyltransferase activity"/>
    <property type="evidence" value="ECO:0000318"/>
    <property type="project" value="GO_Central"/>
</dbReference>
<dbReference type="GO" id="GO:0030488">
    <property type="term" value="P:tRNA methylation"/>
    <property type="evidence" value="ECO:0000314"/>
    <property type="project" value="SGD"/>
</dbReference>
<dbReference type="GO" id="GO:0006400">
    <property type="term" value="P:tRNA modification"/>
    <property type="evidence" value="ECO:0000304"/>
    <property type="project" value="Reactome"/>
</dbReference>
<dbReference type="GO" id="GO:0031591">
    <property type="term" value="P:wybutosine biosynthetic process"/>
    <property type="evidence" value="ECO:0000315"/>
    <property type="project" value="SGD"/>
</dbReference>
<dbReference type="FunFam" id="3.40.50.150:FF:000437">
    <property type="entry name" value="tRNA wybutosine-synthesizing protein 2"/>
    <property type="match status" value="1"/>
</dbReference>
<dbReference type="Gene3D" id="3.40.50.150">
    <property type="entry name" value="Vaccinia Virus protein VP39"/>
    <property type="match status" value="1"/>
</dbReference>
<dbReference type="InterPro" id="IPR030382">
    <property type="entry name" value="MeTrfase_TRM5/TYW2"/>
</dbReference>
<dbReference type="InterPro" id="IPR029063">
    <property type="entry name" value="SAM-dependent_MTases_sf"/>
</dbReference>
<dbReference type="InterPro" id="IPR056743">
    <property type="entry name" value="TRM5-TYW2-like_MTfase"/>
</dbReference>
<dbReference type="InterPro" id="IPR026274">
    <property type="entry name" value="tRNA_wybutosine_synth_prot_2"/>
</dbReference>
<dbReference type="PANTHER" id="PTHR23245">
    <property type="entry name" value="TRNA METHYLTRANSFERASE"/>
    <property type="match status" value="1"/>
</dbReference>
<dbReference type="PANTHER" id="PTHR23245:SF25">
    <property type="entry name" value="TRNA WYBUTOSINE-SYNTHESIZING PROTEIN 2 HOMOLOG"/>
    <property type="match status" value="1"/>
</dbReference>
<dbReference type="Pfam" id="PF02475">
    <property type="entry name" value="TRM5-TYW2_MTfase"/>
    <property type="match status" value="1"/>
</dbReference>
<dbReference type="PIRSF" id="PIRSF038972">
    <property type="entry name" value="Trm12"/>
    <property type="match status" value="1"/>
</dbReference>
<dbReference type="SUPFAM" id="SSF53335">
    <property type="entry name" value="S-adenosyl-L-methionine-dependent methyltransferases"/>
    <property type="match status" value="1"/>
</dbReference>
<dbReference type="PROSITE" id="PS51684">
    <property type="entry name" value="SAM_MT_TRM5_TYW2"/>
    <property type="match status" value="1"/>
</dbReference>
<organism>
    <name type="scientific">Saccharomyces cerevisiae (strain ATCC 204508 / S288c)</name>
    <name type="common">Baker's yeast</name>
    <dbReference type="NCBI Taxonomy" id="559292"/>
    <lineage>
        <taxon>Eukaryota</taxon>
        <taxon>Fungi</taxon>
        <taxon>Dikarya</taxon>
        <taxon>Ascomycota</taxon>
        <taxon>Saccharomycotina</taxon>
        <taxon>Saccharomycetes</taxon>
        <taxon>Saccharomycetales</taxon>
        <taxon>Saccharomycetaceae</taxon>
        <taxon>Saccharomyces</taxon>
    </lineage>
</organism>
<feature type="chain" id="PRO_0000203264" description="tRNA wybutosine-synthesizing protein 2">
    <location>
        <begin position="1"/>
        <end position="462"/>
    </location>
</feature>
<feature type="binding site" evidence="1">
    <location>
        <position position="257"/>
    </location>
    <ligand>
        <name>S-adenosyl-L-methionine</name>
        <dbReference type="ChEBI" id="CHEBI:59789"/>
    </ligand>
</feature>
<feature type="binding site" evidence="1">
    <location>
        <position position="264"/>
    </location>
    <ligand>
        <name>S-adenosyl-L-methionine</name>
        <dbReference type="ChEBI" id="CHEBI:59789"/>
    </ligand>
</feature>
<feature type="binding site" evidence="1">
    <location>
        <begin position="305"/>
        <end position="306"/>
    </location>
    <ligand>
        <name>S-adenosyl-L-methionine</name>
        <dbReference type="ChEBI" id="CHEBI:59789"/>
    </ligand>
</feature>
<keyword id="KW-0963">Cytoplasm</keyword>
<keyword id="KW-1185">Reference proteome</keyword>
<keyword id="KW-0949">S-adenosyl-L-methionine</keyword>
<keyword id="KW-0808">Transferase</keyword>
<keyword id="KW-0819">tRNA processing</keyword>
<accession>Q04235</accession>
<accession>D6VZH0</accession>
<gene>
    <name type="primary">TRM12</name>
    <name type="synonym">TYW2</name>
    <name type="ordered locus">YML005W</name>
    <name type="ORF">YM9571.14</name>
</gene>